<sequence length="448" mass="50112">MLWLALGPFPAMENQVLVIRIKIPNSGAVDWTVHSGPQLLFRDVLDVIGQVLPEATTTAFEYEDEDGDRITVRSDEEMKAMLSYYYSTVMEQQVNGQLIEPLQIFPRACKPPGERNIHGLKVNTRAGPSQHSSPAVSDSLPSNSLKKSSAELKKILANGQMNEQDIRYRDTLGHGNGGTVYKAYHVPSGKILAVKVILLDITLELQKQIMSELEILYKCDSSYIIGFYGAFFVENRISICTEFMDGGSLDVYRKMPEHVLGRIAVAVVKGLTYLWSLKILHRDVKPSNMLVNTRGQVKLCDFGVSTQLVNSIAKTYVGTNAYMAPERISGEQYGIHSDVWSLGISFMELALGRFPYPQIQKNQGSLMPLQLLQCIVDEDSPVLPVGEFSEPFVHFITQCMRKQPKERPAPEELMGHPFIVQFNDGNAAVVSMWVCRALEERRSQQGPP</sequence>
<dbReference type="EC" id="2.7.12.2"/>
<dbReference type="EMBL" id="U25265">
    <property type="protein sequence ID" value="AAA96146.1"/>
    <property type="molecule type" value="mRNA"/>
</dbReference>
<dbReference type="EMBL" id="U71087">
    <property type="protein sequence ID" value="AAB16851.1"/>
    <property type="molecule type" value="mRNA"/>
</dbReference>
<dbReference type="EMBL" id="U71088">
    <property type="protein sequence ID" value="AAB16852.2"/>
    <property type="molecule type" value="mRNA"/>
</dbReference>
<dbReference type="EMBL" id="BT006780">
    <property type="protein sequence ID" value="AAP35426.1"/>
    <property type="molecule type" value="mRNA"/>
</dbReference>
<dbReference type="EMBL" id="AK293459">
    <property type="protein sequence ID" value="BAG56954.1"/>
    <property type="molecule type" value="mRNA"/>
</dbReference>
<dbReference type="EMBL" id="CR542229">
    <property type="protein sequence ID" value="CAG47025.1"/>
    <property type="molecule type" value="mRNA"/>
</dbReference>
<dbReference type="EMBL" id="AC009292">
    <property type="status" value="NOT_ANNOTATED_CDS"/>
    <property type="molecule type" value="Genomic_DNA"/>
</dbReference>
<dbReference type="EMBL" id="AC016355">
    <property type="status" value="NOT_ANNOTATED_CDS"/>
    <property type="molecule type" value="Genomic_DNA"/>
</dbReference>
<dbReference type="EMBL" id="AC103753">
    <property type="status" value="NOT_ANNOTATED_CDS"/>
    <property type="molecule type" value="Genomic_DNA"/>
</dbReference>
<dbReference type="EMBL" id="BC008838">
    <property type="protein sequence ID" value="AAH08838.1"/>
    <property type="molecule type" value="mRNA"/>
</dbReference>
<dbReference type="CCDS" id="CCDS10224.1">
    <molecule id="Q13163-1"/>
</dbReference>
<dbReference type="CCDS" id="CCDS42051.1">
    <molecule id="Q13163-2"/>
</dbReference>
<dbReference type="CCDS" id="CCDS55970.1">
    <molecule id="Q13163-4"/>
</dbReference>
<dbReference type="RefSeq" id="NP_001193733.1">
    <molecule id="Q13163-4"/>
    <property type="nucleotide sequence ID" value="NM_001206804.2"/>
</dbReference>
<dbReference type="RefSeq" id="NP_002748.1">
    <molecule id="Q13163-2"/>
    <property type="nucleotide sequence ID" value="NM_002757.4"/>
</dbReference>
<dbReference type="RefSeq" id="NP_660143.1">
    <molecule id="Q13163-1"/>
    <property type="nucleotide sequence ID" value="NM_145160.3"/>
</dbReference>
<dbReference type="PDB" id="2NPT">
    <property type="method" value="X-ray"/>
    <property type="resolution" value="1.75 A"/>
    <property type="chains" value="A/C=5-108"/>
</dbReference>
<dbReference type="PDB" id="2O2V">
    <property type="method" value="X-ray"/>
    <property type="resolution" value="1.83 A"/>
    <property type="chains" value="A=5-108"/>
</dbReference>
<dbReference type="PDB" id="4IC7">
    <property type="method" value="X-ray"/>
    <property type="resolution" value="2.60 A"/>
    <property type="chains" value="B/E=16-130"/>
</dbReference>
<dbReference type="PDBsum" id="2NPT"/>
<dbReference type="PDBsum" id="2O2V"/>
<dbReference type="PDBsum" id="4IC7"/>
<dbReference type="SMR" id="Q13163"/>
<dbReference type="BioGRID" id="111593">
    <property type="interactions" value="121"/>
</dbReference>
<dbReference type="CORUM" id="Q13163"/>
<dbReference type="DIP" id="DIP-27558N"/>
<dbReference type="FunCoup" id="Q13163">
    <property type="interactions" value="2209"/>
</dbReference>
<dbReference type="IntAct" id="Q13163">
    <property type="interactions" value="65"/>
</dbReference>
<dbReference type="MINT" id="Q13163"/>
<dbReference type="STRING" id="9606.ENSP00000178640"/>
<dbReference type="BindingDB" id="Q13163"/>
<dbReference type="ChEMBL" id="CHEMBL4948"/>
<dbReference type="DrugBank" id="DB12010">
    <property type="generic name" value="Fostamatinib"/>
</dbReference>
<dbReference type="DrugBank" id="DB14904">
    <property type="generic name" value="Pimasertib"/>
</dbReference>
<dbReference type="DrugCentral" id="Q13163"/>
<dbReference type="GuidetoPHARMACOLOGY" id="2066"/>
<dbReference type="iPTMnet" id="Q13163"/>
<dbReference type="PhosphoSitePlus" id="Q13163"/>
<dbReference type="BioMuta" id="MAP2K5"/>
<dbReference type="DMDM" id="118572669"/>
<dbReference type="CPTAC" id="CPTAC-818"/>
<dbReference type="CPTAC" id="CPTAC-819"/>
<dbReference type="jPOST" id="Q13163"/>
<dbReference type="MassIVE" id="Q13163"/>
<dbReference type="PaxDb" id="9606-ENSP00000178640"/>
<dbReference type="PeptideAtlas" id="Q13163"/>
<dbReference type="ProteomicsDB" id="59199">
    <molecule id="Q13163-1"/>
</dbReference>
<dbReference type="ProteomicsDB" id="59200">
    <molecule id="Q13163-2"/>
</dbReference>
<dbReference type="ProteomicsDB" id="59201">
    <molecule id="Q13163-3"/>
</dbReference>
<dbReference type="ProteomicsDB" id="59202">
    <molecule id="Q13163-4"/>
</dbReference>
<dbReference type="Pumba" id="Q13163"/>
<dbReference type="Antibodypedia" id="26267">
    <property type="antibodies" value="589 antibodies from 38 providers"/>
</dbReference>
<dbReference type="DNASU" id="5607"/>
<dbReference type="Ensembl" id="ENST00000178640.10">
    <molecule id="Q13163-1"/>
    <property type="protein sequence ID" value="ENSP00000178640.5"/>
    <property type="gene ID" value="ENSG00000137764.20"/>
</dbReference>
<dbReference type="Ensembl" id="ENST00000354498.9">
    <molecule id="Q13163-4"/>
    <property type="protein sequence ID" value="ENSP00000346493.5"/>
    <property type="gene ID" value="ENSG00000137764.20"/>
</dbReference>
<dbReference type="Ensembl" id="ENST00000395476.6">
    <molecule id="Q13163-2"/>
    <property type="protein sequence ID" value="ENSP00000378859.2"/>
    <property type="gene ID" value="ENSG00000137764.20"/>
</dbReference>
<dbReference type="GeneID" id="5607"/>
<dbReference type="KEGG" id="hsa:5607"/>
<dbReference type="MANE-Select" id="ENST00000178640.10">
    <property type="protein sequence ID" value="ENSP00000178640.5"/>
    <property type="RefSeq nucleotide sequence ID" value="NM_145160.3"/>
    <property type="RefSeq protein sequence ID" value="NP_660143.1"/>
</dbReference>
<dbReference type="UCSC" id="uc002aqu.4">
    <molecule id="Q13163-1"/>
    <property type="organism name" value="human"/>
</dbReference>
<dbReference type="AGR" id="HGNC:6845"/>
<dbReference type="CTD" id="5607"/>
<dbReference type="DisGeNET" id="5607"/>
<dbReference type="GeneCards" id="MAP2K5"/>
<dbReference type="HGNC" id="HGNC:6845">
    <property type="gene designation" value="MAP2K5"/>
</dbReference>
<dbReference type="HPA" id="ENSG00000137764">
    <property type="expression patterns" value="Low tissue specificity"/>
</dbReference>
<dbReference type="MIM" id="602520">
    <property type="type" value="gene"/>
</dbReference>
<dbReference type="neXtProt" id="NX_Q13163"/>
<dbReference type="OpenTargets" id="ENSG00000137764"/>
<dbReference type="PharmGKB" id="PA30590"/>
<dbReference type="VEuPathDB" id="HostDB:ENSG00000137764"/>
<dbReference type="eggNOG" id="KOG0581">
    <property type="taxonomic scope" value="Eukaryota"/>
</dbReference>
<dbReference type="GeneTree" id="ENSGT00940000157505"/>
<dbReference type="HOGENOM" id="CLU_000288_2_0_1"/>
<dbReference type="InParanoid" id="Q13163"/>
<dbReference type="OMA" id="ANDCTQV"/>
<dbReference type="OrthoDB" id="10252354at2759"/>
<dbReference type="PAN-GO" id="Q13163">
    <property type="GO annotations" value="2 GO annotations based on evolutionary models"/>
</dbReference>
<dbReference type="PhylomeDB" id="Q13163"/>
<dbReference type="TreeFam" id="TF106468"/>
<dbReference type="BRENDA" id="2.7.12.2">
    <property type="organism ID" value="2681"/>
</dbReference>
<dbReference type="PathwayCommons" id="Q13163"/>
<dbReference type="Reactome" id="R-HSA-198765">
    <property type="pathway name" value="Signalling to ERK5"/>
</dbReference>
<dbReference type="SignaLink" id="Q13163"/>
<dbReference type="SIGNOR" id="Q13163"/>
<dbReference type="BioGRID-ORCS" id="5607">
    <property type="hits" value="24 hits in 1192 CRISPR screens"/>
</dbReference>
<dbReference type="ChiTaRS" id="MAP2K5">
    <property type="organism name" value="human"/>
</dbReference>
<dbReference type="EvolutionaryTrace" id="Q13163"/>
<dbReference type="GeneWiki" id="MAP2K5"/>
<dbReference type="GenomeRNAi" id="5607"/>
<dbReference type="Pharos" id="Q13163">
    <property type="development level" value="Tchem"/>
</dbReference>
<dbReference type="PRO" id="PR:Q13163"/>
<dbReference type="Proteomes" id="UP000005640">
    <property type="component" value="Chromosome 15"/>
</dbReference>
<dbReference type="RNAct" id="Q13163">
    <property type="molecule type" value="protein"/>
</dbReference>
<dbReference type="Bgee" id="ENSG00000137764">
    <property type="expression patterns" value="Expressed in right testis and 204 other cell types or tissues"/>
</dbReference>
<dbReference type="ExpressionAtlas" id="Q13163">
    <property type="expression patterns" value="baseline and differential"/>
</dbReference>
<dbReference type="GO" id="GO:0005819">
    <property type="term" value="C:spindle"/>
    <property type="evidence" value="ECO:0007669"/>
    <property type="project" value="Ensembl"/>
</dbReference>
<dbReference type="GO" id="GO:0005524">
    <property type="term" value="F:ATP binding"/>
    <property type="evidence" value="ECO:0007669"/>
    <property type="project" value="UniProtKB-KW"/>
</dbReference>
<dbReference type="GO" id="GO:0004708">
    <property type="term" value="F:MAP kinase kinase activity"/>
    <property type="evidence" value="ECO:0000318"/>
    <property type="project" value="GO_Central"/>
</dbReference>
<dbReference type="GO" id="GO:0046872">
    <property type="term" value="F:metal ion binding"/>
    <property type="evidence" value="ECO:0007669"/>
    <property type="project" value="UniProtKB-KW"/>
</dbReference>
<dbReference type="GO" id="GO:0004672">
    <property type="term" value="F:protein kinase activity"/>
    <property type="evidence" value="ECO:0000304"/>
    <property type="project" value="ProtInc"/>
</dbReference>
<dbReference type="GO" id="GO:0106310">
    <property type="term" value="F:protein serine kinase activity"/>
    <property type="evidence" value="ECO:0007669"/>
    <property type="project" value="RHEA"/>
</dbReference>
<dbReference type="GO" id="GO:0004674">
    <property type="term" value="F:protein serine/threonine kinase activity"/>
    <property type="evidence" value="ECO:0007669"/>
    <property type="project" value="UniProtKB-KW"/>
</dbReference>
<dbReference type="GO" id="GO:0004713">
    <property type="term" value="F:protein tyrosine kinase activity"/>
    <property type="evidence" value="ECO:0007669"/>
    <property type="project" value="UniProtKB-KW"/>
</dbReference>
<dbReference type="GO" id="GO:0071363">
    <property type="term" value="P:cellular response to growth factor stimulus"/>
    <property type="evidence" value="ECO:0000250"/>
    <property type="project" value="BHF-UCL"/>
</dbReference>
<dbReference type="GO" id="GO:0071499">
    <property type="term" value="P:cellular response to laminar fluid shear stress"/>
    <property type="evidence" value="ECO:0000304"/>
    <property type="project" value="BHF-UCL"/>
</dbReference>
<dbReference type="GO" id="GO:0070375">
    <property type="term" value="P:ERK5 cascade"/>
    <property type="evidence" value="ECO:0007669"/>
    <property type="project" value="Ensembl"/>
</dbReference>
<dbReference type="GO" id="GO:0007507">
    <property type="term" value="P:heart development"/>
    <property type="evidence" value="ECO:0007669"/>
    <property type="project" value="Ensembl"/>
</dbReference>
<dbReference type="GO" id="GO:0048009">
    <property type="term" value="P:insulin-like growth factor receptor signaling pathway"/>
    <property type="evidence" value="ECO:0007669"/>
    <property type="project" value="Ensembl"/>
</dbReference>
<dbReference type="GO" id="GO:0000165">
    <property type="term" value="P:MAPK cascade"/>
    <property type="evidence" value="ECO:0000250"/>
    <property type="project" value="UniProtKB"/>
</dbReference>
<dbReference type="GO" id="GO:0043124">
    <property type="term" value="P:negative regulation of canonical NF-kappaB signal transduction"/>
    <property type="evidence" value="ECO:0000250"/>
    <property type="project" value="BHF-UCL"/>
</dbReference>
<dbReference type="GO" id="GO:0090051">
    <property type="term" value="P:negative regulation of cell migration involved in sprouting angiogenesis"/>
    <property type="evidence" value="ECO:0000250"/>
    <property type="project" value="BHF-UCL"/>
</dbReference>
<dbReference type="GO" id="GO:2000342">
    <property type="term" value="P:negative regulation of chemokine (C-X-C motif) ligand 2 production"/>
    <property type="evidence" value="ECO:0000250"/>
    <property type="project" value="BHF-UCL"/>
</dbReference>
<dbReference type="GO" id="GO:2001240">
    <property type="term" value="P:negative regulation of extrinsic apoptotic signaling pathway in absence of ligand"/>
    <property type="evidence" value="ECO:0000250"/>
    <property type="project" value="BHF-UCL"/>
</dbReference>
<dbReference type="GO" id="GO:0034115">
    <property type="term" value="P:negative regulation of heterotypic cell-cell adhesion"/>
    <property type="evidence" value="ECO:0000250"/>
    <property type="project" value="BHF-UCL"/>
</dbReference>
<dbReference type="GO" id="GO:0032717">
    <property type="term" value="P:negative regulation of interleukin-8 production"/>
    <property type="evidence" value="ECO:0000250"/>
    <property type="project" value="BHF-UCL"/>
</dbReference>
<dbReference type="GO" id="GO:0060761">
    <property type="term" value="P:negative regulation of response to cytokine stimulus"/>
    <property type="evidence" value="ECO:0000250"/>
    <property type="project" value="BHF-UCL"/>
</dbReference>
<dbReference type="GO" id="GO:0034392">
    <property type="term" value="P:negative regulation of smooth muscle cell apoptotic process"/>
    <property type="evidence" value="ECO:0000250"/>
    <property type="project" value="UniProtKB"/>
</dbReference>
<dbReference type="GO" id="GO:0000122">
    <property type="term" value="P:negative regulation of transcription by RNA polymerase II"/>
    <property type="evidence" value="ECO:0000250"/>
    <property type="project" value="BHF-UCL"/>
</dbReference>
<dbReference type="GO" id="GO:0030307">
    <property type="term" value="P:positive regulation of cell growth"/>
    <property type="evidence" value="ECO:0007669"/>
    <property type="project" value="Ensembl"/>
</dbReference>
<dbReference type="GO" id="GO:0050679">
    <property type="term" value="P:positive regulation of epithelial cell proliferation"/>
    <property type="evidence" value="ECO:0007669"/>
    <property type="project" value="Ensembl"/>
</dbReference>
<dbReference type="GO" id="GO:0051247">
    <property type="term" value="P:positive regulation of protein metabolic process"/>
    <property type="evidence" value="ECO:0000250"/>
    <property type="project" value="BHF-UCL"/>
</dbReference>
<dbReference type="GO" id="GO:0045944">
    <property type="term" value="P:positive regulation of transcription by RNA polymerase II"/>
    <property type="evidence" value="ECO:0000250"/>
    <property type="project" value="BHF-UCL"/>
</dbReference>
<dbReference type="GO" id="GO:0007165">
    <property type="term" value="P:signal transduction"/>
    <property type="evidence" value="ECO:0000304"/>
    <property type="project" value="ProtInc"/>
</dbReference>
<dbReference type="CDD" id="cd06395">
    <property type="entry name" value="PB1_Map2k5"/>
    <property type="match status" value="1"/>
</dbReference>
<dbReference type="CDD" id="cd06619">
    <property type="entry name" value="PKc_MKK5"/>
    <property type="match status" value="1"/>
</dbReference>
<dbReference type="FunFam" id="1.10.510.10:FF:000296">
    <property type="entry name" value="Dual specificity mitogen-activated protein kinase kinase 5"/>
    <property type="match status" value="1"/>
</dbReference>
<dbReference type="FunFam" id="3.10.20.90:FF:000085">
    <property type="entry name" value="Dual specificity mitogen-activated protein kinase kinase 5"/>
    <property type="match status" value="1"/>
</dbReference>
<dbReference type="FunFam" id="3.30.200.20:FF:000197">
    <property type="entry name" value="dual specificity mitogen-activated protein kinase kinase 5"/>
    <property type="match status" value="1"/>
</dbReference>
<dbReference type="Gene3D" id="3.10.20.90">
    <property type="entry name" value="Phosphatidylinositol 3-kinase Catalytic Subunit, Chain A, domain 1"/>
    <property type="match status" value="1"/>
</dbReference>
<dbReference type="Gene3D" id="3.30.200.20">
    <property type="entry name" value="Phosphorylase Kinase, domain 1"/>
    <property type="match status" value="1"/>
</dbReference>
<dbReference type="Gene3D" id="1.10.510.10">
    <property type="entry name" value="Transferase(Phosphotransferase) domain 1"/>
    <property type="match status" value="1"/>
</dbReference>
<dbReference type="InterPro" id="IPR052468">
    <property type="entry name" value="Dual_spec_MAPK_kinase"/>
</dbReference>
<dbReference type="InterPro" id="IPR011009">
    <property type="entry name" value="Kinase-like_dom_sf"/>
</dbReference>
<dbReference type="InterPro" id="IPR053793">
    <property type="entry name" value="PB1-like"/>
</dbReference>
<dbReference type="InterPro" id="IPR000270">
    <property type="entry name" value="PB1_dom"/>
</dbReference>
<dbReference type="InterPro" id="IPR034851">
    <property type="entry name" value="PB1_MAP2K5"/>
</dbReference>
<dbReference type="InterPro" id="IPR000719">
    <property type="entry name" value="Prot_kinase_dom"/>
</dbReference>
<dbReference type="InterPro" id="IPR017441">
    <property type="entry name" value="Protein_kinase_ATP_BS"/>
</dbReference>
<dbReference type="InterPro" id="IPR008271">
    <property type="entry name" value="Ser/Thr_kinase_AS"/>
</dbReference>
<dbReference type="PANTHER" id="PTHR47238">
    <property type="entry name" value="MITOGEN-ACTIVATED PROTEIN KINASE KINASE 5"/>
    <property type="match status" value="1"/>
</dbReference>
<dbReference type="PANTHER" id="PTHR47238:SF4">
    <property type="entry name" value="MITOGEN-ACTIVATED PROTEIN KINASE KINASE 5"/>
    <property type="match status" value="1"/>
</dbReference>
<dbReference type="Pfam" id="PF00564">
    <property type="entry name" value="PB1"/>
    <property type="match status" value="1"/>
</dbReference>
<dbReference type="Pfam" id="PF00069">
    <property type="entry name" value="Pkinase"/>
    <property type="match status" value="1"/>
</dbReference>
<dbReference type="SMART" id="SM00666">
    <property type="entry name" value="PB1"/>
    <property type="match status" value="1"/>
</dbReference>
<dbReference type="SMART" id="SM00220">
    <property type="entry name" value="S_TKc"/>
    <property type="match status" value="1"/>
</dbReference>
<dbReference type="SUPFAM" id="SSF54277">
    <property type="entry name" value="CAD &amp; PB1 domains"/>
    <property type="match status" value="1"/>
</dbReference>
<dbReference type="SUPFAM" id="SSF56112">
    <property type="entry name" value="Protein kinase-like (PK-like)"/>
    <property type="match status" value="1"/>
</dbReference>
<dbReference type="PROSITE" id="PS51745">
    <property type="entry name" value="PB1"/>
    <property type="match status" value="1"/>
</dbReference>
<dbReference type="PROSITE" id="PS00107">
    <property type="entry name" value="PROTEIN_KINASE_ATP"/>
    <property type="match status" value="1"/>
</dbReference>
<dbReference type="PROSITE" id="PS50011">
    <property type="entry name" value="PROTEIN_KINASE_DOM"/>
    <property type="match status" value="1"/>
</dbReference>
<dbReference type="PROSITE" id="PS00108">
    <property type="entry name" value="PROTEIN_KINASE_ST"/>
    <property type="match status" value="1"/>
</dbReference>
<feature type="chain" id="PRO_0000086383" description="Dual specificity mitogen-activated protein kinase kinase 5">
    <location>
        <begin position="1"/>
        <end position="448"/>
    </location>
</feature>
<feature type="domain" description="PB1" evidence="4">
    <location>
        <begin position="18"/>
        <end position="109"/>
    </location>
</feature>
<feature type="domain" description="Protein kinase" evidence="3">
    <location>
        <begin position="166"/>
        <end position="409"/>
    </location>
</feature>
<feature type="region of interest" description="Interaction with MAPK7" evidence="1">
    <location>
        <begin position="18"/>
        <end position="25"/>
    </location>
</feature>
<feature type="region of interest" description="Interaction with MAP3K2/MAP3K3" evidence="1">
    <location>
        <begin position="64"/>
        <end position="68"/>
    </location>
</feature>
<feature type="region of interest" description="Disordered" evidence="6">
    <location>
        <begin position="116"/>
        <end position="144"/>
    </location>
</feature>
<feature type="region of interest" description="Interaction with MAPK7" evidence="1">
    <location>
        <begin position="117"/>
        <end position="131"/>
    </location>
</feature>
<feature type="compositionally biased region" description="Polar residues" evidence="6">
    <location>
        <begin position="126"/>
        <end position="144"/>
    </location>
</feature>
<feature type="active site" description="Proton acceptor" evidence="3 5">
    <location>
        <position position="283"/>
    </location>
</feature>
<feature type="binding site" evidence="3">
    <location>
        <begin position="172"/>
        <end position="180"/>
    </location>
    <ligand>
        <name>ATP</name>
        <dbReference type="ChEBI" id="CHEBI:30616"/>
    </ligand>
</feature>
<feature type="binding site">
    <location>
        <position position="195"/>
    </location>
    <ligand>
        <name>ATP</name>
        <dbReference type="ChEBI" id="CHEBI:30616"/>
    </ligand>
</feature>
<feature type="modified residue" description="Phosphoserine" evidence="9 17">
    <location>
        <position position="311"/>
    </location>
</feature>
<feature type="modified residue" description="Phosphothreonine" evidence="9">
    <location>
        <position position="315"/>
    </location>
</feature>
<feature type="splice variant" id="VSP_043333" description="In isoform 4." evidence="13">
    <original>MLWLALGPFPAMENQVLVIRIKIPNSGAVDWTVHSGPQLLFRDVL</original>
    <variation>MMEGHFPQS</variation>
    <location>
        <begin position="1"/>
        <end position="45"/>
    </location>
</feature>
<feature type="splice variant" id="VSP_021825" description="In isoform A and isoform C." evidence="14 15">
    <location>
        <begin position="349"/>
        <end position="358"/>
    </location>
</feature>
<feature type="splice variant" id="VSP_021826" description="In isoform C." evidence="15">
    <original>QQGPP</original>
    <variation>LASLPSPSPSV</variation>
    <location>
        <begin position="444"/>
        <end position="448"/>
    </location>
</feature>
<feature type="sequence variant" id="VAR_040823" description="In dbSNP:rs56241934." evidence="8">
    <original>H</original>
    <variation>R</variation>
    <location>
        <position position="118"/>
    </location>
</feature>
<feature type="sequence variant" id="VAR_040824" description="In dbSNP:rs1226964455." evidence="8">
    <original>A</original>
    <variation>V</variation>
    <location>
        <position position="427"/>
    </location>
</feature>
<feature type="sequence variant" id="VAR_046070" description="In dbSNP:rs55811347." evidence="8">
    <original>A</original>
    <variation>T</variation>
    <location>
        <position position="428"/>
    </location>
</feature>
<feature type="mutagenesis site" description="Inactivation." evidence="9">
    <original>K</original>
    <variation>M</variation>
    <location>
        <position position="195"/>
    </location>
</feature>
<feature type="mutagenesis site" description="Inactivation." evidence="9">
    <original>S</original>
    <variation>A</variation>
    <location>
        <position position="311"/>
    </location>
</feature>
<feature type="mutagenesis site" description="Inactivation." evidence="9">
    <original>T</original>
    <variation>A</variation>
    <location>
        <position position="315"/>
    </location>
</feature>
<feature type="strand" evidence="18">
    <location>
        <begin position="17"/>
        <end position="23"/>
    </location>
</feature>
<feature type="turn" evidence="18">
    <location>
        <begin position="24"/>
        <end position="26"/>
    </location>
</feature>
<feature type="strand" evidence="18">
    <location>
        <begin position="27"/>
        <end position="33"/>
    </location>
</feature>
<feature type="helix" evidence="18">
    <location>
        <begin position="41"/>
        <end position="51"/>
    </location>
</feature>
<feature type="strand" evidence="18">
    <location>
        <begin position="58"/>
        <end position="63"/>
    </location>
</feature>
<feature type="strand" evidence="19">
    <location>
        <begin position="65"/>
        <end position="67"/>
    </location>
</feature>
<feature type="strand" evidence="18">
    <location>
        <begin position="69"/>
        <end position="72"/>
    </location>
</feature>
<feature type="helix" evidence="18">
    <location>
        <begin position="75"/>
        <end position="93"/>
    </location>
</feature>
<feature type="turn" evidence="18">
    <location>
        <begin position="94"/>
        <end position="96"/>
    </location>
</feature>
<feature type="strand" evidence="18">
    <location>
        <begin position="102"/>
        <end position="107"/>
    </location>
</feature>
<reference key="1">
    <citation type="journal article" date="1995" name="J. Biol. Chem.">
        <title>Components of a new human protein kinase signal transduction pathway.</title>
        <authorList>
            <person name="Zhou G."/>
            <person name="Bao Z.Q."/>
            <person name="Dixon J.E."/>
        </authorList>
    </citation>
    <scope>NUCLEOTIDE SEQUENCE [MRNA] (ISOFORM A)</scope>
    <scope>FUNCTION</scope>
    <scope>INTERACTION WITH ERK5 AND MAPK7</scope>
    <scope>MUTAGENESIS OF LYS-195; SER-311 AND THR-315</scope>
    <scope>PHOSPHORYLATION AT SER-311 AND THR-315</scope>
    <source>
        <tissue>Fetal brain</tissue>
    </source>
</reference>
<reference key="2">
    <citation type="journal article" date="1997" name="EMBO J.">
        <title>BMK1/ERK5 regulates serum-induced early gene expression through transcription factor MEF2C.</title>
        <authorList>
            <person name="Kato Y."/>
            <person name="Kravchenko V.V."/>
            <person name="Tapping R.I."/>
            <person name="Han J."/>
            <person name="Ulevitch R.J."/>
            <person name="Lee J.-D."/>
        </authorList>
    </citation>
    <scope>NUCLEOTIDE SEQUENCE [MRNA] (ISOFORMS B AND C)</scope>
    <scope>FUNCTION</scope>
    <source>
        <tissue>Placenta</tissue>
    </source>
</reference>
<reference key="3">
    <citation type="submission" date="2007-05" db="EMBL/GenBank/DDBJ databases">
        <authorList>
            <person name="Lee J.D."/>
        </authorList>
    </citation>
    <scope>SEQUENCE REVISION TO C-TERMINUS OF ISOFORM C</scope>
</reference>
<reference key="4">
    <citation type="submission" date="2003-05" db="EMBL/GenBank/DDBJ databases">
        <title>Cloning of human full-length CDSs in BD Creator(TM) system donor vector.</title>
        <authorList>
            <person name="Kalnine N."/>
            <person name="Chen X."/>
            <person name="Rolfs A."/>
            <person name="Halleck A."/>
            <person name="Hines L."/>
            <person name="Eisenstein S."/>
            <person name="Koundinya M."/>
            <person name="Raphael J."/>
            <person name="Moreira D."/>
            <person name="Kelley T."/>
            <person name="LaBaer J."/>
            <person name="Lin Y."/>
            <person name="Phelan M."/>
            <person name="Farmer A."/>
        </authorList>
    </citation>
    <scope>NUCLEOTIDE SEQUENCE [LARGE SCALE MRNA] (ISOFORM B)</scope>
</reference>
<reference key="5">
    <citation type="journal article" date="2004" name="Nat. Genet.">
        <title>Complete sequencing and characterization of 21,243 full-length human cDNAs.</title>
        <authorList>
            <person name="Ota T."/>
            <person name="Suzuki Y."/>
            <person name="Nishikawa T."/>
            <person name="Otsuki T."/>
            <person name="Sugiyama T."/>
            <person name="Irie R."/>
            <person name="Wakamatsu A."/>
            <person name="Hayashi K."/>
            <person name="Sato H."/>
            <person name="Nagai K."/>
            <person name="Kimura K."/>
            <person name="Makita H."/>
            <person name="Sekine M."/>
            <person name="Obayashi M."/>
            <person name="Nishi T."/>
            <person name="Shibahara T."/>
            <person name="Tanaka T."/>
            <person name="Ishii S."/>
            <person name="Yamamoto J."/>
            <person name="Saito K."/>
            <person name="Kawai Y."/>
            <person name="Isono Y."/>
            <person name="Nakamura Y."/>
            <person name="Nagahari K."/>
            <person name="Murakami K."/>
            <person name="Yasuda T."/>
            <person name="Iwayanagi T."/>
            <person name="Wagatsuma M."/>
            <person name="Shiratori A."/>
            <person name="Sudo H."/>
            <person name="Hosoiri T."/>
            <person name="Kaku Y."/>
            <person name="Kodaira H."/>
            <person name="Kondo H."/>
            <person name="Sugawara M."/>
            <person name="Takahashi M."/>
            <person name="Kanda K."/>
            <person name="Yokoi T."/>
            <person name="Furuya T."/>
            <person name="Kikkawa E."/>
            <person name="Omura Y."/>
            <person name="Abe K."/>
            <person name="Kamihara K."/>
            <person name="Katsuta N."/>
            <person name="Sato K."/>
            <person name="Tanikawa M."/>
            <person name="Yamazaki M."/>
            <person name="Ninomiya K."/>
            <person name="Ishibashi T."/>
            <person name="Yamashita H."/>
            <person name="Murakawa K."/>
            <person name="Fujimori K."/>
            <person name="Tanai H."/>
            <person name="Kimata M."/>
            <person name="Watanabe M."/>
            <person name="Hiraoka S."/>
            <person name="Chiba Y."/>
            <person name="Ishida S."/>
            <person name="Ono Y."/>
            <person name="Takiguchi S."/>
            <person name="Watanabe S."/>
            <person name="Yosida M."/>
            <person name="Hotuta T."/>
            <person name="Kusano J."/>
            <person name="Kanehori K."/>
            <person name="Takahashi-Fujii A."/>
            <person name="Hara H."/>
            <person name="Tanase T.-O."/>
            <person name="Nomura Y."/>
            <person name="Togiya S."/>
            <person name="Komai F."/>
            <person name="Hara R."/>
            <person name="Takeuchi K."/>
            <person name="Arita M."/>
            <person name="Imose N."/>
            <person name="Musashino K."/>
            <person name="Yuuki H."/>
            <person name="Oshima A."/>
            <person name="Sasaki N."/>
            <person name="Aotsuka S."/>
            <person name="Yoshikawa Y."/>
            <person name="Matsunawa H."/>
            <person name="Ichihara T."/>
            <person name="Shiohata N."/>
            <person name="Sano S."/>
            <person name="Moriya S."/>
            <person name="Momiyama H."/>
            <person name="Satoh N."/>
            <person name="Takami S."/>
            <person name="Terashima Y."/>
            <person name="Suzuki O."/>
            <person name="Nakagawa S."/>
            <person name="Senoh A."/>
            <person name="Mizoguchi H."/>
            <person name="Goto Y."/>
            <person name="Shimizu F."/>
            <person name="Wakebe H."/>
            <person name="Hishigaki H."/>
            <person name="Watanabe T."/>
            <person name="Sugiyama A."/>
            <person name="Takemoto M."/>
            <person name="Kawakami B."/>
            <person name="Yamazaki M."/>
            <person name="Watanabe K."/>
            <person name="Kumagai A."/>
            <person name="Itakura S."/>
            <person name="Fukuzumi Y."/>
            <person name="Fujimori Y."/>
            <person name="Komiyama M."/>
            <person name="Tashiro H."/>
            <person name="Tanigami A."/>
            <person name="Fujiwara T."/>
            <person name="Ono T."/>
            <person name="Yamada K."/>
            <person name="Fujii Y."/>
            <person name="Ozaki K."/>
            <person name="Hirao M."/>
            <person name="Ohmori Y."/>
            <person name="Kawabata A."/>
            <person name="Hikiji T."/>
            <person name="Kobatake N."/>
            <person name="Inagaki H."/>
            <person name="Ikema Y."/>
            <person name="Okamoto S."/>
            <person name="Okitani R."/>
            <person name="Kawakami T."/>
            <person name="Noguchi S."/>
            <person name="Itoh T."/>
            <person name="Shigeta K."/>
            <person name="Senba T."/>
            <person name="Matsumura K."/>
            <person name="Nakajima Y."/>
            <person name="Mizuno T."/>
            <person name="Morinaga M."/>
            <person name="Sasaki M."/>
            <person name="Togashi T."/>
            <person name="Oyama M."/>
            <person name="Hata H."/>
            <person name="Watanabe M."/>
            <person name="Komatsu T."/>
            <person name="Mizushima-Sugano J."/>
            <person name="Satoh T."/>
            <person name="Shirai Y."/>
            <person name="Takahashi Y."/>
            <person name="Nakagawa K."/>
            <person name="Okumura K."/>
            <person name="Nagase T."/>
            <person name="Nomura N."/>
            <person name="Kikuchi H."/>
            <person name="Masuho Y."/>
            <person name="Yamashita R."/>
            <person name="Nakai K."/>
            <person name="Yada T."/>
            <person name="Nakamura Y."/>
            <person name="Ohara O."/>
            <person name="Isogai T."/>
            <person name="Sugano S."/>
        </authorList>
    </citation>
    <scope>NUCLEOTIDE SEQUENCE [LARGE SCALE MRNA] (ISOFORM 4)</scope>
    <source>
        <tissue>Cerebellum</tissue>
    </source>
</reference>
<reference key="6">
    <citation type="submission" date="2004-06" db="EMBL/GenBank/DDBJ databases">
        <title>Cloning of human full open reading frames in Gateway(TM) system entry vector (pDONR201).</title>
        <authorList>
            <person name="Halleck A."/>
            <person name="Ebert L."/>
            <person name="Mkoundinya M."/>
            <person name="Schick M."/>
            <person name="Eisenstein S."/>
            <person name="Neubert P."/>
            <person name="Kstrang K."/>
            <person name="Schatten R."/>
            <person name="Shen B."/>
            <person name="Henze S."/>
            <person name="Mar W."/>
            <person name="Korn B."/>
            <person name="Zuo D."/>
            <person name="Hu Y."/>
            <person name="LaBaer J."/>
        </authorList>
    </citation>
    <scope>NUCLEOTIDE SEQUENCE [LARGE SCALE MRNA] (ISOFORM B)</scope>
</reference>
<reference key="7">
    <citation type="journal article" date="2006" name="Nature">
        <title>Analysis of the DNA sequence and duplication history of human chromosome 15.</title>
        <authorList>
            <person name="Zody M.C."/>
            <person name="Garber M."/>
            <person name="Sharpe T."/>
            <person name="Young S.K."/>
            <person name="Rowen L."/>
            <person name="O'Neill K."/>
            <person name="Whittaker C.A."/>
            <person name="Kamal M."/>
            <person name="Chang J.L."/>
            <person name="Cuomo C.A."/>
            <person name="Dewar K."/>
            <person name="FitzGerald M.G."/>
            <person name="Kodira C.D."/>
            <person name="Madan A."/>
            <person name="Qin S."/>
            <person name="Yang X."/>
            <person name="Abbasi N."/>
            <person name="Abouelleil A."/>
            <person name="Arachchi H.M."/>
            <person name="Baradarani L."/>
            <person name="Birditt B."/>
            <person name="Bloom S."/>
            <person name="Bloom T."/>
            <person name="Borowsky M.L."/>
            <person name="Burke J."/>
            <person name="Butler J."/>
            <person name="Cook A."/>
            <person name="DeArellano K."/>
            <person name="DeCaprio D."/>
            <person name="Dorris L. III"/>
            <person name="Dors M."/>
            <person name="Eichler E.E."/>
            <person name="Engels R."/>
            <person name="Fahey J."/>
            <person name="Fleetwood P."/>
            <person name="Friedman C."/>
            <person name="Gearin G."/>
            <person name="Hall J.L."/>
            <person name="Hensley G."/>
            <person name="Johnson E."/>
            <person name="Jones C."/>
            <person name="Kamat A."/>
            <person name="Kaur A."/>
            <person name="Locke D.P."/>
            <person name="Madan A."/>
            <person name="Munson G."/>
            <person name="Jaffe D.B."/>
            <person name="Lui A."/>
            <person name="Macdonald P."/>
            <person name="Mauceli E."/>
            <person name="Naylor J.W."/>
            <person name="Nesbitt R."/>
            <person name="Nicol R."/>
            <person name="O'Leary S.B."/>
            <person name="Ratcliffe A."/>
            <person name="Rounsley S."/>
            <person name="She X."/>
            <person name="Sneddon K.M.B."/>
            <person name="Stewart S."/>
            <person name="Sougnez C."/>
            <person name="Stone S.M."/>
            <person name="Topham K."/>
            <person name="Vincent D."/>
            <person name="Wang S."/>
            <person name="Zimmer A.R."/>
            <person name="Birren B.W."/>
            <person name="Hood L."/>
            <person name="Lander E.S."/>
            <person name="Nusbaum C."/>
        </authorList>
    </citation>
    <scope>NUCLEOTIDE SEQUENCE [LARGE SCALE GENOMIC DNA]</scope>
</reference>
<reference key="8">
    <citation type="journal article" date="2004" name="Genome Res.">
        <title>The status, quality, and expansion of the NIH full-length cDNA project: the Mammalian Gene Collection (MGC).</title>
        <authorList>
            <consortium name="The MGC Project Team"/>
        </authorList>
    </citation>
    <scope>NUCLEOTIDE SEQUENCE [LARGE SCALE MRNA] (ISOFORM B)</scope>
    <source>
        <tissue>Brain</tissue>
    </source>
</reference>
<reference key="9">
    <citation type="journal article" date="2006" name="Science">
        <title>Yersinia YopJ acetylates and inhibits kinase activation by blocking phosphorylation.</title>
        <authorList>
            <person name="Mukherjee S."/>
            <person name="Keitany G."/>
            <person name="Li Y."/>
            <person name="Wang Y."/>
            <person name="Ball H.L."/>
            <person name="Goldsmith E.J."/>
            <person name="Orth K."/>
        </authorList>
    </citation>
    <scope>INTERACTION WITH YOPJ (MICROBIAL INFECTION)</scope>
    <scope>ACETYLATION</scope>
</reference>
<reference key="10">
    <citation type="journal article" date="2008" name="Mol. Cell">
        <title>Kinase-selective enrichment enables quantitative phosphoproteomics of the kinome across the cell cycle.</title>
        <authorList>
            <person name="Daub H."/>
            <person name="Olsen J.V."/>
            <person name="Bairlein M."/>
            <person name="Gnad F."/>
            <person name="Oppermann F.S."/>
            <person name="Korner R."/>
            <person name="Greff Z."/>
            <person name="Keri G."/>
            <person name="Stemmann O."/>
            <person name="Mann M."/>
        </authorList>
    </citation>
    <scope>IDENTIFICATION BY MASS SPECTROMETRY [LARGE SCALE ANALYSIS]</scope>
    <source>
        <tissue>Cervix carcinoma</tissue>
    </source>
</reference>
<reference key="11">
    <citation type="journal article" date="2009" name="Mol. Cell. Proteomics">
        <title>Large-scale proteomics analysis of the human kinome.</title>
        <authorList>
            <person name="Oppermann F.S."/>
            <person name="Gnad F."/>
            <person name="Olsen J.V."/>
            <person name="Hornberger R."/>
            <person name="Greff Z."/>
            <person name="Keri G."/>
            <person name="Mann M."/>
            <person name="Daub H."/>
        </authorList>
    </citation>
    <scope>PHOSPHORYLATION [LARGE SCALE ANALYSIS] AT SER-311</scope>
    <scope>IDENTIFICATION BY MASS SPECTROMETRY [LARGE SCALE ANALYSIS]</scope>
</reference>
<reference key="12">
    <citation type="submission" date="2006-11" db="PDB data bank">
        <title>Crystal structure of the complex of human mitogen activated protein kinase kinase 5 phox domain (MAP2K5-Phox) with human mitogen activated protein kinase kinase kinase 3 (MAP3K2B-Phox).</title>
        <authorList>
            <consortium name="Structural genomics consortium (SGC)"/>
        </authorList>
    </citation>
    <scope>X-RAY CRYSTALLOGRAPHY (1.75 ANGSTROMS) OF 4-108 IN COMPLEX WITH MAP3K2</scope>
</reference>
<reference key="13">
    <citation type="submission" date="2006-11" db="PDB data bank">
        <title>Crystal structure of the complex of human mitogen activated protein kinase kinase 5 phox domain (MAP2K5-Phox) with human mitogen activated protein kinase kinase kinase 3 (MAP3K3B-Phox).</title>
        <authorList>
            <consortium name="Structural genomics consortium (SGC)"/>
        </authorList>
    </citation>
    <scope>X-RAY CRYSTALLOGRAPHY (1.83 ANGSTROMS) OF 4-108 IN COMPLEX WITH MAP3K3</scope>
</reference>
<reference key="14">
    <citation type="journal article" date="2007" name="Nature">
        <title>Patterns of somatic mutation in human cancer genomes.</title>
        <authorList>
            <person name="Greenman C."/>
            <person name="Stephens P."/>
            <person name="Smith R."/>
            <person name="Dalgliesh G.L."/>
            <person name="Hunter C."/>
            <person name="Bignell G."/>
            <person name="Davies H."/>
            <person name="Teague J."/>
            <person name="Butler A."/>
            <person name="Stevens C."/>
            <person name="Edkins S."/>
            <person name="O'Meara S."/>
            <person name="Vastrik I."/>
            <person name="Schmidt E.E."/>
            <person name="Avis T."/>
            <person name="Barthorpe S."/>
            <person name="Bhamra G."/>
            <person name="Buck G."/>
            <person name="Choudhury B."/>
            <person name="Clements J."/>
            <person name="Cole J."/>
            <person name="Dicks E."/>
            <person name="Forbes S."/>
            <person name="Gray K."/>
            <person name="Halliday K."/>
            <person name="Harrison R."/>
            <person name="Hills K."/>
            <person name="Hinton J."/>
            <person name="Jenkinson A."/>
            <person name="Jones D."/>
            <person name="Menzies A."/>
            <person name="Mironenko T."/>
            <person name="Perry J."/>
            <person name="Raine K."/>
            <person name="Richardson D."/>
            <person name="Shepherd R."/>
            <person name="Small A."/>
            <person name="Tofts C."/>
            <person name="Varian J."/>
            <person name="Webb T."/>
            <person name="West S."/>
            <person name="Widaa S."/>
            <person name="Yates A."/>
            <person name="Cahill D.P."/>
            <person name="Louis D.N."/>
            <person name="Goldstraw P."/>
            <person name="Nicholson A.G."/>
            <person name="Brasseur F."/>
            <person name="Looijenga L."/>
            <person name="Weber B.L."/>
            <person name="Chiew Y.-E."/>
            <person name="DeFazio A."/>
            <person name="Greaves M.F."/>
            <person name="Green A.R."/>
            <person name="Campbell P."/>
            <person name="Birney E."/>
            <person name="Easton D.F."/>
            <person name="Chenevix-Trench G."/>
            <person name="Tan M.-H."/>
            <person name="Khoo S.K."/>
            <person name="Teh B.T."/>
            <person name="Yuen S.T."/>
            <person name="Leung S.Y."/>
            <person name="Wooster R."/>
            <person name="Futreal P.A."/>
            <person name="Stratton M.R."/>
        </authorList>
    </citation>
    <scope>VARIANTS [LARGE SCALE ANALYSIS] ARG-118; VAL-427 AND THR-428</scope>
</reference>
<accession>Q13163</accession>
<accession>B4DE43</accession>
<accession>Q92961</accession>
<accession>Q92962</accession>
<name>MP2K5_HUMAN</name>
<comment type="function">
    <text evidence="2 9 10">Acts as a scaffold for the formation of a ternary MAP3K2/MAP3K3-MAP3K5-MAPK7 signaling complex. Activation of this pathway appears to play a critical role in protecting cells from stress-induced apoptosis, neuronal survival and cardiac development and angiogenesis. As part of the MAPK/ERK signaling pathway, acts as a negative regulator of apoptosis in cardiomyocytes via promotion of STUB1/CHIP-mediated ubiquitination and degradation of ICER-type isoforms of CREM (By similarity).</text>
</comment>
<comment type="catalytic activity">
    <reaction>
        <text>L-seryl-[protein] + ATP = O-phospho-L-seryl-[protein] + ADP + H(+)</text>
        <dbReference type="Rhea" id="RHEA:17989"/>
        <dbReference type="Rhea" id="RHEA-COMP:9863"/>
        <dbReference type="Rhea" id="RHEA-COMP:11604"/>
        <dbReference type="ChEBI" id="CHEBI:15378"/>
        <dbReference type="ChEBI" id="CHEBI:29999"/>
        <dbReference type="ChEBI" id="CHEBI:30616"/>
        <dbReference type="ChEBI" id="CHEBI:83421"/>
        <dbReference type="ChEBI" id="CHEBI:456216"/>
        <dbReference type="EC" id="2.7.12.2"/>
    </reaction>
</comment>
<comment type="catalytic activity">
    <reaction>
        <text>L-threonyl-[protein] + ATP = O-phospho-L-threonyl-[protein] + ADP + H(+)</text>
        <dbReference type="Rhea" id="RHEA:46608"/>
        <dbReference type="Rhea" id="RHEA-COMP:11060"/>
        <dbReference type="Rhea" id="RHEA-COMP:11605"/>
        <dbReference type="ChEBI" id="CHEBI:15378"/>
        <dbReference type="ChEBI" id="CHEBI:30013"/>
        <dbReference type="ChEBI" id="CHEBI:30616"/>
        <dbReference type="ChEBI" id="CHEBI:61977"/>
        <dbReference type="ChEBI" id="CHEBI:456216"/>
        <dbReference type="EC" id="2.7.12.2"/>
    </reaction>
</comment>
<comment type="catalytic activity">
    <reaction>
        <text>L-tyrosyl-[protein] + ATP = O-phospho-L-tyrosyl-[protein] + ADP + H(+)</text>
        <dbReference type="Rhea" id="RHEA:10596"/>
        <dbReference type="Rhea" id="RHEA-COMP:10136"/>
        <dbReference type="Rhea" id="RHEA-COMP:20101"/>
        <dbReference type="ChEBI" id="CHEBI:15378"/>
        <dbReference type="ChEBI" id="CHEBI:30616"/>
        <dbReference type="ChEBI" id="CHEBI:46858"/>
        <dbReference type="ChEBI" id="CHEBI:61978"/>
        <dbReference type="ChEBI" id="CHEBI:456216"/>
        <dbReference type="EC" id="2.7.12.2"/>
    </reaction>
</comment>
<comment type="cofactor">
    <cofactor>
        <name>Mg(2+)</name>
        <dbReference type="ChEBI" id="CHEBI:18420"/>
    </cofactor>
</comment>
<comment type="subunit">
    <text evidence="1 9 11 12">Interacts with PARD6A, MAP3K3 and MAPK7. Forms a complex with SQSTM1 and PRKCZ or PRKCI (By similarity).</text>
</comment>
<comment type="subunit">
    <text evidence="7">(Microbial infection) Interacts with Yersinia YopJ.</text>
</comment>
<comment type="interaction">
    <interactant intactId="EBI-307294">
        <id>Q13163</id>
    </interactant>
    <interactant intactId="EBI-18036948">
        <id>Q3SXR2</id>
        <label>C3orf36</label>
    </interactant>
    <organismsDiffer>false</organismsDiffer>
    <experiments>3</experiments>
</comment>
<comment type="interaction">
    <interactant intactId="EBI-307294">
        <id>Q13163</id>
    </interactant>
    <interactant intactId="EBI-7357329">
        <id>Q9H596</id>
        <label>DUSP21</label>
    </interactant>
    <organismsDiffer>false</organismsDiffer>
    <experiments>3</experiments>
</comment>
<comment type="interaction">
    <interactant intactId="EBI-307294">
        <id>Q13163</id>
    </interactant>
    <interactant intactId="EBI-401755">
        <id>P62993</id>
        <label>GRB2</label>
    </interactant>
    <organismsDiffer>false</organismsDiffer>
    <experiments>2</experiments>
</comment>
<comment type="interaction">
    <interactant intactId="EBI-307294">
        <id>Q13163</id>
    </interactant>
    <interactant intactId="EBI-11978177">
        <id>Q96NT3-2</id>
        <label>GUCD1</label>
    </interactant>
    <organismsDiffer>false</organismsDiffer>
    <experiments>3</experiments>
</comment>
<comment type="interaction">
    <interactant intactId="EBI-307294">
        <id>Q13163</id>
    </interactant>
    <interactant intactId="EBI-352572">
        <id>P08238</id>
        <label>HSP90AB1</label>
    </interactant>
    <organismsDiffer>false</organismsDiffer>
    <experiments>4</experiments>
</comment>
<comment type="interaction">
    <interactant intactId="EBI-307294">
        <id>Q13163</id>
    </interactant>
    <interactant intactId="EBI-2340947">
        <id>Q8N448</id>
        <label>LNX2</label>
    </interactant>
    <organismsDiffer>false</organismsDiffer>
    <experiments>3</experiments>
</comment>
<comment type="interaction">
    <interactant intactId="EBI-307294">
        <id>Q13163</id>
    </interactant>
    <interactant intactId="EBI-357393">
        <id>Q9Y2U5</id>
        <label>MAP3K2</label>
    </interactant>
    <organismsDiffer>false</organismsDiffer>
    <experiments>7</experiments>
</comment>
<comment type="interaction">
    <interactant intactId="EBI-307294">
        <id>Q13163</id>
    </interactant>
    <interactant intactId="EBI-307281">
        <id>Q99759</id>
        <label>MAP3K3</label>
    </interactant>
    <organismsDiffer>false</organismsDiffer>
    <experiments>5</experiments>
</comment>
<comment type="interaction">
    <interactant intactId="EBI-307294">
        <id>Q13163</id>
    </interactant>
    <interactant intactId="EBI-1213983">
        <id>Q13164</id>
        <label>MAPK7</label>
    </interactant>
    <organismsDiffer>false</organismsDiffer>
    <experiments>8</experiments>
</comment>
<comment type="interaction">
    <interactant intactId="EBI-307294">
        <id>Q13163</id>
    </interactant>
    <interactant intactId="EBI-357275">
        <id>Q99471</id>
        <label>PFDN5</label>
    </interactant>
    <organismsDiffer>false</organismsDiffer>
    <experiments>3</experiments>
</comment>
<comment type="interaction">
    <interactant intactId="EBI-307294">
        <id>Q13163</id>
    </interactant>
    <interactant intactId="EBI-307104">
        <id>Q13501</id>
        <label>SQSTM1</label>
    </interactant>
    <organismsDiffer>false</organismsDiffer>
    <experiments>5</experiments>
</comment>
<comment type="interaction">
    <interactant intactId="EBI-307294">
        <id>Q13163</id>
    </interactant>
    <interactant intactId="EBI-743265">
        <id>Q9BUY5</id>
        <label>ZNF426</label>
    </interactant>
    <organismsDiffer>false</organismsDiffer>
    <experiments>3</experiments>
</comment>
<comment type="interaction">
    <interactant intactId="EBI-307294">
        <id>Q13163</id>
    </interactant>
    <interactant intactId="EBI-4395669">
        <id>Q6ZNG0</id>
        <label>ZNF620</label>
    </interactant>
    <organismsDiffer>false</organismsDiffer>
    <experiments>3</experiments>
</comment>
<comment type="alternative products">
    <event type="alternative splicing"/>
    <isoform>
        <id>Q13163-1</id>
        <name>B</name>
        <sequence type="displayed"/>
    </isoform>
    <isoform>
        <id>Q13163-2</id>
        <name>A</name>
        <sequence type="described" ref="VSP_021825"/>
    </isoform>
    <isoform>
        <id>Q13163-3</id>
        <name>C</name>
        <sequence type="described" ref="VSP_021825 VSP_021826"/>
    </isoform>
    <isoform>
        <id>Q13163-4</id>
        <name>4</name>
        <sequence type="described" ref="VSP_043333"/>
    </isoform>
</comment>
<comment type="tissue specificity">
    <text>Expressed in many adult tissues. Abundant in heart and skeletal muscle.</text>
</comment>
<comment type="domain">
    <text evidence="1">Binds MAP3K2/MAP3K3 and MAPK7 via non-overlapping residues of the PB1 domain. This domain also mediates interactions with SQSTM1 and PARD6A (By similarity).</text>
</comment>
<comment type="PTM">
    <text evidence="1">Activated by phosphorylation on Ser/Thr by MAP kinase kinase kinases.</text>
</comment>
<comment type="PTM">
    <text evidence="7 9">(Microbial infection) Yersinia YopJ may acetylate Ser/Thr residues, preventing phosphorylation and activation, thus blocking the MAPK signaling pathway.</text>
</comment>
<comment type="miscellaneous">
    <molecule>Isoform C</molecule>
    <text evidence="16">Incomplete sequence.</text>
</comment>
<comment type="similarity">
    <text evidence="16">Belongs to the protein kinase superfamily. STE Ser/Thr protein kinase family. MAP kinase kinase subfamily.</text>
</comment>
<organism>
    <name type="scientific">Homo sapiens</name>
    <name type="common">Human</name>
    <dbReference type="NCBI Taxonomy" id="9606"/>
    <lineage>
        <taxon>Eukaryota</taxon>
        <taxon>Metazoa</taxon>
        <taxon>Chordata</taxon>
        <taxon>Craniata</taxon>
        <taxon>Vertebrata</taxon>
        <taxon>Euteleostomi</taxon>
        <taxon>Mammalia</taxon>
        <taxon>Eutheria</taxon>
        <taxon>Euarchontoglires</taxon>
        <taxon>Primates</taxon>
        <taxon>Haplorrhini</taxon>
        <taxon>Catarrhini</taxon>
        <taxon>Hominidae</taxon>
        <taxon>Homo</taxon>
    </lineage>
</organism>
<protein>
    <recommendedName>
        <fullName>Dual specificity mitogen-activated protein kinase kinase 5</fullName>
        <shortName>MAP kinase kinase 5</shortName>
        <shortName>MAPKK 5</shortName>
        <ecNumber>2.7.12.2</ecNumber>
    </recommendedName>
    <alternativeName>
        <fullName>MAPK/ERK kinase 5</fullName>
        <shortName>MEK 5</shortName>
    </alternativeName>
</protein>
<gene>
    <name type="primary">MAP2K5</name>
    <name type="synonym">MEK5</name>
    <name type="synonym">MKK5</name>
    <name type="synonym">PRKMK5</name>
</gene>
<proteinExistence type="evidence at protein level"/>
<keyword id="KW-0002">3D-structure</keyword>
<keyword id="KW-0007">Acetylation</keyword>
<keyword id="KW-0025">Alternative splicing</keyword>
<keyword id="KW-0067">ATP-binding</keyword>
<keyword id="KW-0418">Kinase</keyword>
<keyword id="KW-0460">Magnesium</keyword>
<keyword id="KW-0479">Metal-binding</keyword>
<keyword id="KW-0547">Nucleotide-binding</keyword>
<keyword id="KW-0597">Phosphoprotein</keyword>
<keyword id="KW-1267">Proteomics identification</keyword>
<keyword id="KW-1185">Reference proteome</keyword>
<keyword id="KW-0723">Serine/threonine-protein kinase</keyword>
<keyword id="KW-0808">Transferase</keyword>
<keyword id="KW-0829">Tyrosine-protein kinase</keyword>
<evidence type="ECO:0000250" key="1"/>
<evidence type="ECO:0000250" key="2">
    <source>
        <dbReference type="UniProtKB" id="Q62862"/>
    </source>
</evidence>
<evidence type="ECO:0000255" key="3">
    <source>
        <dbReference type="PROSITE-ProRule" id="PRU00159"/>
    </source>
</evidence>
<evidence type="ECO:0000255" key="4">
    <source>
        <dbReference type="PROSITE-ProRule" id="PRU01081"/>
    </source>
</evidence>
<evidence type="ECO:0000255" key="5">
    <source>
        <dbReference type="PROSITE-ProRule" id="PRU10027"/>
    </source>
</evidence>
<evidence type="ECO:0000256" key="6">
    <source>
        <dbReference type="SAM" id="MobiDB-lite"/>
    </source>
</evidence>
<evidence type="ECO:0000269" key="7">
    <source>
    </source>
</evidence>
<evidence type="ECO:0000269" key="8">
    <source>
    </source>
</evidence>
<evidence type="ECO:0000269" key="9">
    <source>
    </source>
</evidence>
<evidence type="ECO:0000269" key="10">
    <source>
    </source>
</evidence>
<evidence type="ECO:0000269" key="11">
    <source ref="12"/>
</evidence>
<evidence type="ECO:0000269" key="12">
    <source ref="13"/>
</evidence>
<evidence type="ECO:0000303" key="13">
    <source>
    </source>
</evidence>
<evidence type="ECO:0000303" key="14">
    <source>
    </source>
</evidence>
<evidence type="ECO:0000303" key="15">
    <source>
    </source>
</evidence>
<evidence type="ECO:0000305" key="16"/>
<evidence type="ECO:0007744" key="17">
    <source>
    </source>
</evidence>
<evidence type="ECO:0007829" key="18">
    <source>
        <dbReference type="PDB" id="2NPT"/>
    </source>
</evidence>
<evidence type="ECO:0007829" key="19">
    <source>
        <dbReference type="PDB" id="4IC7"/>
    </source>
</evidence>